<name>SPEE_BACC1</name>
<sequence>MELWFTEKQTKHFGITARINRTLHTEQTEFQKLDMVETEEFGNMLILDGMVMTTEKDEFVYHEMVAHVPLFTHPNPENVLVVGGGDGGVIREVLKHPSVKKATLVEIDGKVIEYSKQYLPSIAGALDNERVEVKVGDGFLHIAESENEYDVIMVDSTEPVGPAVNLFTKGFYAGISKALKEDGIFVAQTDNPWFTPELITTVFKDVKEIFPITRLYTANIPTYPSGLWTFTIGSKKHDPLEVSEERFHEIETKYYTKELHNAAFALPKFVGDLIK</sequence>
<accession>Q72X78</accession>
<comment type="function">
    <text evidence="1">Catalyzes the irreversible transfer of a propylamine group from the amino donor S-adenosylmethioninamine (decarboxy-AdoMet) to putrescine (1,4-diaminobutane) to yield spermidine.</text>
</comment>
<comment type="catalytic activity">
    <reaction evidence="1">
        <text>S-adenosyl 3-(methylsulfanyl)propylamine + putrescine = S-methyl-5'-thioadenosine + spermidine + H(+)</text>
        <dbReference type="Rhea" id="RHEA:12721"/>
        <dbReference type="ChEBI" id="CHEBI:15378"/>
        <dbReference type="ChEBI" id="CHEBI:17509"/>
        <dbReference type="ChEBI" id="CHEBI:57443"/>
        <dbReference type="ChEBI" id="CHEBI:57834"/>
        <dbReference type="ChEBI" id="CHEBI:326268"/>
        <dbReference type="EC" id="2.5.1.16"/>
    </reaction>
</comment>
<comment type="pathway">
    <text evidence="1">Amine and polyamine biosynthesis; spermidine biosynthesis; spermidine from putrescine: step 1/1.</text>
</comment>
<comment type="subunit">
    <text evidence="1">Homodimer or homotetramer.</text>
</comment>
<comment type="subcellular location">
    <subcellularLocation>
        <location evidence="1">Cytoplasm</location>
    </subcellularLocation>
</comment>
<comment type="similarity">
    <text evidence="1">Belongs to the spermidine/spermine synthase family.</text>
</comment>
<evidence type="ECO:0000255" key="1">
    <source>
        <dbReference type="HAMAP-Rule" id="MF_00198"/>
    </source>
</evidence>
<dbReference type="EC" id="2.5.1.16" evidence="1"/>
<dbReference type="EMBL" id="AE017194">
    <property type="protein sequence ID" value="AAS44400.1"/>
    <property type="molecule type" value="Genomic_DNA"/>
</dbReference>
<dbReference type="SMR" id="Q72X78"/>
<dbReference type="KEGG" id="bca:BCE_5500"/>
<dbReference type="HOGENOM" id="CLU_048199_0_0_9"/>
<dbReference type="UniPathway" id="UPA00248">
    <property type="reaction ID" value="UER00314"/>
</dbReference>
<dbReference type="Proteomes" id="UP000002527">
    <property type="component" value="Chromosome"/>
</dbReference>
<dbReference type="GO" id="GO:0005829">
    <property type="term" value="C:cytosol"/>
    <property type="evidence" value="ECO:0007669"/>
    <property type="project" value="TreeGrafter"/>
</dbReference>
<dbReference type="GO" id="GO:0004766">
    <property type="term" value="F:spermidine synthase activity"/>
    <property type="evidence" value="ECO:0007669"/>
    <property type="project" value="UniProtKB-UniRule"/>
</dbReference>
<dbReference type="GO" id="GO:0008295">
    <property type="term" value="P:spermidine biosynthetic process"/>
    <property type="evidence" value="ECO:0007669"/>
    <property type="project" value="UniProtKB-UniRule"/>
</dbReference>
<dbReference type="CDD" id="cd02440">
    <property type="entry name" value="AdoMet_MTases"/>
    <property type="match status" value="1"/>
</dbReference>
<dbReference type="FunFam" id="2.30.140.10:FF:000004">
    <property type="entry name" value="Polyamine aminopropyltransferase"/>
    <property type="match status" value="1"/>
</dbReference>
<dbReference type="FunFam" id="3.40.50.150:FF:000056">
    <property type="entry name" value="Polyamine aminopropyltransferase"/>
    <property type="match status" value="1"/>
</dbReference>
<dbReference type="Gene3D" id="2.30.140.10">
    <property type="entry name" value="Spermidine synthase, tetramerisation domain"/>
    <property type="match status" value="1"/>
</dbReference>
<dbReference type="Gene3D" id="3.40.50.150">
    <property type="entry name" value="Vaccinia Virus protein VP39"/>
    <property type="match status" value="1"/>
</dbReference>
<dbReference type="HAMAP" id="MF_00198">
    <property type="entry name" value="Spermidine_synth"/>
    <property type="match status" value="1"/>
</dbReference>
<dbReference type="InterPro" id="IPR030374">
    <property type="entry name" value="PABS"/>
</dbReference>
<dbReference type="InterPro" id="IPR030373">
    <property type="entry name" value="PABS_CS"/>
</dbReference>
<dbReference type="InterPro" id="IPR029063">
    <property type="entry name" value="SAM-dependent_MTases_sf"/>
</dbReference>
<dbReference type="InterPro" id="IPR001045">
    <property type="entry name" value="Spermi_synthase"/>
</dbReference>
<dbReference type="InterPro" id="IPR035246">
    <property type="entry name" value="Spermidine_synt_N"/>
</dbReference>
<dbReference type="InterPro" id="IPR037163">
    <property type="entry name" value="Spermidine_synt_N_sf"/>
</dbReference>
<dbReference type="NCBIfam" id="NF037959">
    <property type="entry name" value="MFS_SpdSyn"/>
    <property type="match status" value="1"/>
</dbReference>
<dbReference type="NCBIfam" id="NF002010">
    <property type="entry name" value="PRK00811.1"/>
    <property type="match status" value="1"/>
</dbReference>
<dbReference type="NCBIfam" id="TIGR00417">
    <property type="entry name" value="speE"/>
    <property type="match status" value="1"/>
</dbReference>
<dbReference type="PANTHER" id="PTHR11558:SF11">
    <property type="entry name" value="SPERMIDINE SYNTHASE"/>
    <property type="match status" value="1"/>
</dbReference>
<dbReference type="PANTHER" id="PTHR11558">
    <property type="entry name" value="SPERMIDINE/SPERMINE SYNTHASE"/>
    <property type="match status" value="1"/>
</dbReference>
<dbReference type="Pfam" id="PF17284">
    <property type="entry name" value="Spermine_synt_N"/>
    <property type="match status" value="1"/>
</dbReference>
<dbReference type="Pfam" id="PF01564">
    <property type="entry name" value="Spermine_synth"/>
    <property type="match status" value="1"/>
</dbReference>
<dbReference type="SUPFAM" id="SSF53335">
    <property type="entry name" value="S-adenosyl-L-methionine-dependent methyltransferases"/>
    <property type="match status" value="1"/>
</dbReference>
<dbReference type="PROSITE" id="PS01330">
    <property type="entry name" value="PABS_1"/>
    <property type="match status" value="1"/>
</dbReference>
<dbReference type="PROSITE" id="PS51006">
    <property type="entry name" value="PABS_2"/>
    <property type="match status" value="1"/>
</dbReference>
<proteinExistence type="inferred from homology"/>
<protein>
    <recommendedName>
        <fullName evidence="1">Polyamine aminopropyltransferase</fullName>
    </recommendedName>
    <alternativeName>
        <fullName evidence="1">Putrescine aminopropyltransferase</fullName>
        <shortName evidence="1">PAPT</shortName>
    </alternativeName>
    <alternativeName>
        <fullName evidence="1">Spermidine synthase</fullName>
        <shortName evidence="1">SPDS</shortName>
        <shortName evidence="1">SPDSY</shortName>
        <ecNumber evidence="1">2.5.1.16</ecNumber>
    </alternativeName>
</protein>
<gene>
    <name evidence="1" type="primary">speE</name>
    <name type="ordered locus">BCE_5500</name>
</gene>
<feature type="chain" id="PRO_1000197461" description="Polyamine aminopropyltransferase">
    <location>
        <begin position="1"/>
        <end position="275"/>
    </location>
</feature>
<feature type="domain" description="PABS" evidence="1">
    <location>
        <begin position="2"/>
        <end position="235"/>
    </location>
</feature>
<feature type="active site" description="Proton acceptor" evidence="1">
    <location>
        <position position="155"/>
    </location>
</feature>
<feature type="binding site" evidence="1">
    <location>
        <position position="31"/>
    </location>
    <ligand>
        <name>S-methyl-5'-thioadenosine</name>
        <dbReference type="ChEBI" id="CHEBI:17509"/>
    </ligand>
</feature>
<feature type="binding site" evidence="1">
    <location>
        <position position="62"/>
    </location>
    <ligand>
        <name>spermidine</name>
        <dbReference type="ChEBI" id="CHEBI:57834"/>
    </ligand>
</feature>
<feature type="binding site" evidence="1">
    <location>
        <position position="86"/>
    </location>
    <ligand>
        <name>spermidine</name>
        <dbReference type="ChEBI" id="CHEBI:57834"/>
    </ligand>
</feature>
<feature type="binding site" evidence="1">
    <location>
        <position position="106"/>
    </location>
    <ligand>
        <name>S-methyl-5'-thioadenosine</name>
        <dbReference type="ChEBI" id="CHEBI:17509"/>
    </ligand>
</feature>
<feature type="binding site" evidence="1">
    <location>
        <begin position="137"/>
        <end position="138"/>
    </location>
    <ligand>
        <name>S-methyl-5'-thioadenosine</name>
        <dbReference type="ChEBI" id="CHEBI:17509"/>
    </ligand>
</feature>
<feature type="binding site" evidence="1">
    <location>
        <begin position="155"/>
        <end position="158"/>
    </location>
    <ligand>
        <name>spermidine</name>
        <dbReference type="ChEBI" id="CHEBI:57834"/>
    </ligand>
</feature>
<feature type="binding site" evidence="1">
    <location>
        <position position="162"/>
    </location>
    <ligand>
        <name>S-methyl-5'-thioadenosine</name>
        <dbReference type="ChEBI" id="CHEBI:17509"/>
    </ligand>
</feature>
<organism>
    <name type="scientific">Bacillus cereus (strain ATCC 10987 / NRS 248)</name>
    <dbReference type="NCBI Taxonomy" id="222523"/>
    <lineage>
        <taxon>Bacteria</taxon>
        <taxon>Bacillati</taxon>
        <taxon>Bacillota</taxon>
        <taxon>Bacilli</taxon>
        <taxon>Bacillales</taxon>
        <taxon>Bacillaceae</taxon>
        <taxon>Bacillus</taxon>
        <taxon>Bacillus cereus group</taxon>
    </lineage>
</organism>
<reference key="1">
    <citation type="journal article" date="2004" name="Nucleic Acids Res.">
        <title>The genome sequence of Bacillus cereus ATCC 10987 reveals metabolic adaptations and a large plasmid related to Bacillus anthracis pXO1.</title>
        <authorList>
            <person name="Rasko D.A."/>
            <person name="Ravel J."/>
            <person name="Oekstad O.A."/>
            <person name="Helgason E."/>
            <person name="Cer R.Z."/>
            <person name="Jiang L."/>
            <person name="Shores K.A."/>
            <person name="Fouts D.E."/>
            <person name="Tourasse N.J."/>
            <person name="Angiuoli S.V."/>
            <person name="Kolonay J.F."/>
            <person name="Nelson W.C."/>
            <person name="Kolstoe A.-B."/>
            <person name="Fraser C.M."/>
            <person name="Read T.D."/>
        </authorList>
    </citation>
    <scope>NUCLEOTIDE SEQUENCE [LARGE SCALE GENOMIC DNA]</scope>
    <source>
        <strain>ATCC 10987 / NRS 248</strain>
    </source>
</reference>
<keyword id="KW-0963">Cytoplasm</keyword>
<keyword id="KW-0620">Polyamine biosynthesis</keyword>
<keyword id="KW-0745">Spermidine biosynthesis</keyword>
<keyword id="KW-0808">Transferase</keyword>